<dbReference type="EMBL" id="HE601459">
    <property type="protein sequence ID" value="CAP29507.2"/>
    <property type="status" value="ALT_SEQ"/>
    <property type="molecule type" value="Genomic_DNA"/>
</dbReference>
<dbReference type="RefSeq" id="XP_002641659.1">
    <property type="nucleotide sequence ID" value="XM_002641613.1"/>
</dbReference>
<dbReference type="SMR" id="A8XA40"/>
<dbReference type="FunCoup" id="A8XA40">
    <property type="interactions" value="1432"/>
</dbReference>
<dbReference type="STRING" id="6238.A8XA40"/>
<dbReference type="GlyCosmos" id="A8XA40">
    <property type="glycosylation" value="1 site, No reported glycans"/>
</dbReference>
<dbReference type="EnsemblMetazoa" id="CBG09987.1">
    <property type="protein sequence ID" value="CBG09987.1"/>
    <property type="gene ID" value="WBGene00031476"/>
</dbReference>
<dbReference type="WormBase" id="CBG09987">
    <property type="protein sequence ID" value="CBP08355"/>
    <property type="gene ID" value="WBGene00031476"/>
    <property type="gene designation" value="Cbr-cnx-1"/>
</dbReference>
<dbReference type="eggNOG" id="KOG0675">
    <property type="taxonomic scope" value="Eukaryota"/>
</dbReference>
<dbReference type="HOGENOM" id="CLU_018224_2_1_1"/>
<dbReference type="InParanoid" id="A8XA40"/>
<dbReference type="Proteomes" id="UP000008549">
    <property type="component" value="Unassembled WGS sequence"/>
</dbReference>
<dbReference type="GO" id="GO:0031410">
    <property type="term" value="C:cytoplasmic vesicle"/>
    <property type="evidence" value="ECO:0007669"/>
    <property type="project" value="UniProtKB-KW"/>
</dbReference>
<dbReference type="GO" id="GO:0005789">
    <property type="term" value="C:endoplasmic reticulum membrane"/>
    <property type="evidence" value="ECO:0000318"/>
    <property type="project" value="GO_Central"/>
</dbReference>
<dbReference type="GO" id="GO:0048471">
    <property type="term" value="C:perinuclear region of cytoplasm"/>
    <property type="evidence" value="ECO:0007669"/>
    <property type="project" value="UniProtKB-SubCell"/>
</dbReference>
<dbReference type="GO" id="GO:0005509">
    <property type="term" value="F:calcium ion binding"/>
    <property type="evidence" value="ECO:0000318"/>
    <property type="project" value="GO_Central"/>
</dbReference>
<dbReference type="GO" id="GO:0051082">
    <property type="term" value="F:unfolded protein binding"/>
    <property type="evidence" value="ECO:0007669"/>
    <property type="project" value="InterPro"/>
</dbReference>
<dbReference type="GO" id="GO:0036503">
    <property type="term" value="P:ERAD pathway"/>
    <property type="evidence" value="ECO:0000318"/>
    <property type="project" value="GO_Central"/>
</dbReference>
<dbReference type="GO" id="GO:0036498">
    <property type="term" value="P:IRE1-mediated unfolded protein response"/>
    <property type="evidence" value="ECO:0007669"/>
    <property type="project" value="EnsemblMetazoa"/>
</dbReference>
<dbReference type="GO" id="GO:0006457">
    <property type="term" value="P:protein folding"/>
    <property type="evidence" value="ECO:0000318"/>
    <property type="project" value="GO_Central"/>
</dbReference>
<dbReference type="GO" id="GO:0009408">
    <property type="term" value="P:response to heat"/>
    <property type="evidence" value="ECO:0007669"/>
    <property type="project" value="EnsemblMetazoa"/>
</dbReference>
<dbReference type="FunFam" id="2.10.250.10:FF:000001">
    <property type="entry name" value="Calnexin homolog"/>
    <property type="match status" value="1"/>
</dbReference>
<dbReference type="FunFam" id="2.60.120.200:FF:000011">
    <property type="entry name" value="Probable calnexin"/>
    <property type="match status" value="1"/>
</dbReference>
<dbReference type="Gene3D" id="2.60.120.200">
    <property type="match status" value="1"/>
</dbReference>
<dbReference type="Gene3D" id="2.10.250.10">
    <property type="entry name" value="Calreticulin/calnexin, P domain"/>
    <property type="match status" value="1"/>
</dbReference>
<dbReference type="InterPro" id="IPR001580">
    <property type="entry name" value="Calret/calnex"/>
</dbReference>
<dbReference type="InterPro" id="IPR018124">
    <property type="entry name" value="Calret/calnex_CS"/>
</dbReference>
<dbReference type="InterPro" id="IPR009033">
    <property type="entry name" value="Calreticulin/calnexin_P_dom_sf"/>
</dbReference>
<dbReference type="InterPro" id="IPR013320">
    <property type="entry name" value="ConA-like_dom_sf"/>
</dbReference>
<dbReference type="PANTHER" id="PTHR11073:SF1">
    <property type="entry name" value="CALNEXIN 14D-RELATED"/>
    <property type="match status" value="1"/>
</dbReference>
<dbReference type="PANTHER" id="PTHR11073">
    <property type="entry name" value="CALRETICULIN AND CALNEXIN"/>
    <property type="match status" value="1"/>
</dbReference>
<dbReference type="Pfam" id="PF00262">
    <property type="entry name" value="Calreticulin"/>
    <property type="match status" value="1"/>
</dbReference>
<dbReference type="PRINTS" id="PR00626">
    <property type="entry name" value="CALRETICULIN"/>
</dbReference>
<dbReference type="SUPFAM" id="SSF49899">
    <property type="entry name" value="Concanavalin A-like lectins/glucanases"/>
    <property type="match status" value="1"/>
</dbReference>
<dbReference type="SUPFAM" id="SSF63887">
    <property type="entry name" value="P-domain of calnexin/calreticulin"/>
    <property type="match status" value="1"/>
</dbReference>
<dbReference type="PROSITE" id="PS00803">
    <property type="entry name" value="CALRETICULIN_1"/>
    <property type="match status" value="1"/>
</dbReference>
<dbReference type="PROSITE" id="PS00804">
    <property type="entry name" value="CALRETICULIN_2"/>
    <property type="match status" value="1"/>
</dbReference>
<dbReference type="PROSITE" id="PS00805">
    <property type="entry name" value="CALRETICULIN_REPEAT"/>
    <property type="match status" value="2"/>
</dbReference>
<accession>A8XA40</accession>
<organism>
    <name type="scientific">Caenorhabditis briggsae</name>
    <dbReference type="NCBI Taxonomy" id="6238"/>
    <lineage>
        <taxon>Eukaryota</taxon>
        <taxon>Metazoa</taxon>
        <taxon>Ecdysozoa</taxon>
        <taxon>Nematoda</taxon>
        <taxon>Chromadorea</taxon>
        <taxon>Rhabditida</taxon>
        <taxon>Rhabditina</taxon>
        <taxon>Rhabditomorpha</taxon>
        <taxon>Rhabditoidea</taxon>
        <taxon>Rhabditidae</taxon>
        <taxon>Peloderinae</taxon>
        <taxon>Caenorhabditis</taxon>
    </lineage>
</organism>
<evidence type="ECO:0000250" key="1">
    <source>
        <dbReference type="UniProtKB" id="P14211"/>
    </source>
</evidence>
<evidence type="ECO:0000250" key="2">
    <source>
        <dbReference type="UniProtKB" id="P24643"/>
    </source>
</evidence>
<evidence type="ECO:0000250" key="3">
    <source>
        <dbReference type="UniProtKB" id="P27824"/>
    </source>
</evidence>
<evidence type="ECO:0000250" key="4">
    <source>
        <dbReference type="UniProtKB" id="P34652"/>
    </source>
</evidence>
<evidence type="ECO:0000255" key="5"/>
<evidence type="ECO:0000256" key="6">
    <source>
        <dbReference type="SAM" id="MobiDB-lite"/>
    </source>
</evidence>
<evidence type="ECO:0000305" key="7"/>
<evidence type="ECO:0000312" key="8">
    <source>
        <dbReference type="WormBase" id="CBG09987"/>
    </source>
</evidence>
<proteinExistence type="inferred from homology"/>
<keyword id="KW-0106">Calcium</keyword>
<keyword id="KW-0143">Chaperone</keyword>
<keyword id="KW-0963">Cytoplasm</keyword>
<keyword id="KW-0968">Cytoplasmic vesicle</keyword>
<keyword id="KW-0217">Developmental protein</keyword>
<keyword id="KW-1015">Disulfide bond</keyword>
<keyword id="KW-0256">Endoplasmic reticulum</keyword>
<keyword id="KW-0325">Glycoprotein</keyword>
<keyword id="KW-0472">Membrane</keyword>
<keyword id="KW-0479">Metal-binding</keyword>
<keyword id="KW-1185">Reference proteome</keyword>
<keyword id="KW-0677">Repeat</keyword>
<keyword id="KW-0732">Signal</keyword>
<keyword id="KW-0812">Transmembrane</keyword>
<keyword id="KW-1133">Transmembrane helix</keyword>
<reference key="1">
    <citation type="journal article" date="2003" name="PLoS Biol.">
        <title>The genome sequence of Caenorhabditis briggsae: a platform for comparative genomics.</title>
        <authorList>
            <person name="Stein L.D."/>
            <person name="Bao Z."/>
            <person name="Blasiar D."/>
            <person name="Blumenthal T."/>
            <person name="Brent M.R."/>
            <person name="Chen N."/>
            <person name="Chinwalla A."/>
            <person name="Clarke L."/>
            <person name="Clee C."/>
            <person name="Coghlan A."/>
            <person name="Coulson A."/>
            <person name="D'Eustachio P."/>
            <person name="Fitch D.H.A."/>
            <person name="Fulton L.A."/>
            <person name="Fulton R.E."/>
            <person name="Griffiths-Jones S."/>
            <person name="Harris T.W."/>
            <person name="Hillier L.W."/>
            <person name="Kamath R."/>
            <person name="Kuwabara P.E."/>
            <person name="Mardis E.R."/>
            <person name="Marra M.A."/>
            <person name="Miner T.L."/>
            <person name="Minx P."/>
            <person name="Mullikin J.C."/>
            <person name="Plumb R.W."/>
            <person name="Rogers J."/>
            <person name="Schein J.E."/>
            <person name="Sohrmann M."/>
            <person name="Spieth J."/>
            <person name="Stajich J.E."/>
            <person name="Wei C."/>
            <person name="Willey D."/>
            <person name="Wilson R.K."/>
            <person name="Durbin R.M."/>
            <person name="Waterston R.H."/>
        </authorList>
    </citation>
    <scope>NUCLEOTIDE SEQUENCE [LARGE SCALE GENOMIC DNA]</scope>
    <source>
        <strain>AF16</strain>
    </source>
</reference>
<sequence>MLNRKWSFVFLTFLLVISVNANDDVFEDEDEASESGVEKDEFVPSNFVAPKLADTSKPNFFDYFPVGSKIGQTWIKSLAKKDDVDSEIAKYNGEWSIGAPTKVSIEGDYGLIVKTKARHHAIAAKLETPFVFGSNKFIAQYDVKFEEGQECGGGYLKLLSEGAEKDLASFQDKTPYTIMFGPDKCGASGQVHLIFRYKNPVNGTVSEYHAKQPASIGTAYWDDHNTHLFTLVVKPTGEYSVSVDGKSLYYGNMLSDISPSLTPPKEIFDETDLKPEDWDEREQIEDETASKPDDWDENEPQNVVDESATKPYDWNEEENELIPDPEAQKPQDWDEDMDGSWEAPLIDNPACKGLSGCGTWKPPTIKNPKYRGKWVRPKIANPAYKGKWSPRLIDNPNYFEPKPFDGLAPISAVGIELWTMSENILFDNILITSSEQDASEIAKQTFYIKQQEEYRLAAATGSSNGIFQQIVDATNEKPWLWAVYILCILLPLIAIGVFCFGKGSKPAPNFAKKSDTYSPDDDRVPNLVDDQEEEIIAEDEEDNQPGPSGTQNQPPIDEDEQDEVEQQPSSSKTASSESSSAAEEEDNDHVVHENEPVQPTEEVAKKSPRVTGGAKRRTARRGD</sequence>
<name>CALX_CAEBR</name>
<gene>
    <name evidence="8" type="primary">cnx-1</name>
    <name type="ORF">CBG09987</name>
</gene>
<protein>
    <recommendedName>
        <fullName evidence="4">Calnexin</fullName>
    </recommendedName>
</protein>
<comment type="function">
    <text evidence="3 4">Calcium-binding protein that interacts with newly synthesized monoglucosylated glycoproteins in the endoplasmic reticulum. It may act in assisting protein assembly and/or in the retention within the ER of unassembled protein subunits. It seems to play a major role in the quality control apparatus of the ER by the retention of incorrectly folded proteins. Required for embryogenesis and larval development under heat and ER stress conditions. May be important for germ cell development. Involved in neuronal necrotic cell death (By similarity).</text>
</comment>
<comment type="subcellular location">
    <subcellularLocation>
        <location evidence="3 4">Endoplasmic reticulum membrane</location>
        <topology evidence="3 4">Single-pass type I membrane protein</topology>
    </subcellularLocation>
    <subcellularLocation>
        <location evidence="3 4">Cytoplasm</location>
        <location evidence="3 4">Perinuclear region</location>
    </subcellularLocation>
    <subcellularLocation>
        <location evidence="3 4">Cytoplasmic vesicle</location>
    </subcellularLocation>
</comment>
<comment type="PTM">
    <text evidence="4">Glycosylation is important for its biological activity.</text>
</comment>
<comment type="similarity">
    <text evidence="5">Belongs to the calreticulin family.</text>
</comment>
<comment type="sequence caution" evidence="7">
    <conflict type="erroneous gene model prediction">
        <sequence resource="EMBL-CDS" id="CAP29507"/>
    </conflict>
</comment>
<feature type="signal peptide" evidence="5">
    <location>
        <begin position="1"/>
        <end position="21"/>
    </location>
</feature>
<feature type="chain" id="PRO_0000416936" description="Calnexin" evidence="5">
    <location>
        <begin position="22"/>
        <end position="623"/>
    </location>
</feature>
<feature type="transmembrane region" description="Helical" evidence="5">
    <location>
        <begin position="480"/>
        <end position="500"/>
    </location>
</feature>
<feature type="repeat" description="1-1" evidence="5">
    <location>
        <begin position="269"/>
        <end position="281"/>
    </location>
</feature>
<feature type="repeat" description="1-2" evidence="5">
    <location>
        <begin position="286"/>
        <end position="298"/>
    </location>
</feature>
<feature type="repeat" description="1-3" evidence="5">
    <location>
        <begin position="305"/>
        <end position="317"/>
    </location>
</feature>
<feature type="repeat" description="1-4" evidence="5">
    <location>
        <begin position="324"/>
        <end position="336"/>
    </location>
</feature>
<feature type="repeat" description="2-1" evidence="5">
    <location>
        <begin position="339"/>
        <end position="349"/>
    </location>
</feature>
<feature type="repeat" description="2-2" evidence="5">
    <location>
        <begin position="358"/>
        <end position="368"/>
    </location>
</feature>
<feature type="repeat" description="2-3" evidence="5">
    <location>
        <begin position="372"/>
        <end position="382"/>
    </location>
</feature>
<feature type="repeat" description="2-4" evidence="5">
    <location>
        <begin position="386"/>
        <end position="396"/>
    </location>
</feature>
<feature type="region of interest" description="Disordered" evidence="6">
    <location>
        <begin position="260"/>
        <end position="337"/>
    </location>
</feature>
<feature type="region of interest" description="P domain (Extended arm)" evidence="2">
    <location>
        <begin position="267"/>
        <end position="400"/>
    </location>
</feature>
<feature type="region of interest" description="4 X approximate repeats" evidence="5">
    <location>
        <begin position="269"/>
        <end position="336"/>
    </location>
</feature>
<feature type="region of interest" description="4 X approximate repeats" evidence="5">
    <location>
        <begin position="339"/>
        <end position="396"/>
    </location>
</feature>
<feature type="region of interest" description="Disordered" evidence="6">
    <location>
        <begin position="536"/>
        <end position="623"/>
    </location>
</feature>
<feature type="compositionally biased region" description="Basic and acidic residues" evidence="6">
    <location>
        <begin position="266"/>
        <end position="276"/>
    </location>
</feature>
<feature type="compositionally biased region" description="Acidic residues" evidence="6">
    <location>
        <begin position="277"/>
        <end position="287"/>
    </location>
</feature>
<feature type="compositionally biased region" description="Acidic residues" evidence="6">
    <location>
        <begin position="314"/>
        <end position="323"/>
    </location>
</feature>
<feature type="compositionally biased region" description="Acidic residues" evidence="6">
    <location>
        <begin position="556"/>
        <end position="565"/>
    </location>
</feature>
<feature type="compositionally biased region" description="Low complexity" evidence="6">
    <location>
        <begin position="566"/>
        <end position="581"/>
    </location>
</feature>
<feature type="compositionally biased region" description="Basic residues" evidence="6">
    <location>
        <begin position="614"/>
        <end position="623"/>
    </location>
</feature>
<feature type="binding site" evidence="2">
    <location>
        <position position="108"/>
    </location>
    <ligand>
        <name>Ca(2+)</name>
        <dbReference type="ChEBI" id="CHEBI:29108"/>
    </ligand>
</feature>
<feature type="binding site" evidence="1">
    <location>
        <position position="155"/>
    </location>
    <ligand>
        <name>an alpha-D-glucoside</name>
        <dbReference type="ChEBI" id="CHEBI:22390"/>
    </ligand>
</feature>
<feature type="binding site" evidence="1">
    <location>
        <position position="157"/>
    </location>
    <ligand>
        <name>an alpha-D-glucoside</name>
        <dbReference type="ChEBI" id="CHEBI:22390"/>
    </ligand>
</feature>
<feature type="binding site" evidence="1">
    <location>
        <position position="176"/>
    </location>
    <ligand>
        <name>an alpha-D-glucoside</name>
        <dbReference type="ChEBI" id="CHEBI:22390"/>
    </ligand>
</feature>
<feature type="binding site" evidence="1">
    <location>
        <position position="183"/>
    </location>
    <ligand>
        <name>an alpha-D-glucoside</name>
        <dbReference type="ChEBI" id="CHEBI:22390"/>
    </ligand>
</feature>
<feature type="binding site" evidence="1">
    <location>
        <position position="416"/>
    </location>
    <ligand>
        <name>an alpha-D-glucoside</name>
        <dbReference type="ChEBI" id="CHEBI:22390"/>
    </ligand>
</feature>
<feature type="binding site" evidence="2">
    <location>
        <position position="427"/>
    </location>
    <ligand>
        <name>Ca(2+)</name>
        <dbReference type="ChEBI" id="CHEBI:29108"/>
    </ligand>
</feature>
<feature type="glycosylation site" description="N-linked (GlcNAc...) asparagine" evidence="5">
    <location>
        <position position="202"/>
    </location>
</feature>
<feature type="disulfide bond" evidence="2">
    <location>
        <begin position="151"/>
        <end position="185"/>
    </location>
</feature>
<feature type="disulfide bond" evidence="2">
    <location>
        <begin position="351"/>
        <end position="357"/>
    </location>
</feature>